<accession>P22329</accession>
<evidence type="ECO:0000255" key="1"/>
<evidence type="ECO:0000255" key="2">
    <source>
        <dbReference type="PROSITE-ProRule" id="PRU00521"/>
    </source>
</evidence>
<evidence type="ECO:0000269" key="3">
    <source>
    </source>
</evidence>
<evidence type="ECO:0000305" key="4"/>
<organism>
    <name type="scientific">Gallus gallus</name>
    <name type="common">Chicken</name>
    <dbReference type="NCBI Taxonomy" id="9031"/>
    <lineage>
        <taxon>Eukaryota</taxon>
        <taxon>Metazoa</taxon>
        <taxon>Chordata</taxon>
        <taxon>Craniata</taxon>
        <taxon>Vertebrata</taxon>
        <taxon>Euteleostomi</taxon>
        <taxon>Archelosauria</taxon>
        <taxon>Archosauria</taxon>
        <taxon>Dinosauria</taxon>
        <taxon>Saurischia</taxon>
        <taxon>Theropoda</taxon>
        <taxon>Coelurosauria</taxon>
        <taxon>Aves</taxon>
        <taxon>Neognathae</taxon>
        <taxon>Galloanserae</taxon>
        <taxon>Galliformes</taxon>
        <taxon>Phasianidae</taxon>
        <taxon>Phasianinae</taxon>
        <taxon>Gallus</taxon>
    </lineage>
</organism>
<proteinExistence type="evidence at protein level"/>
<keyword id="KW-0157">Chromophore</keyword>
<keyword id="KW-0903">Direct protein sequencing</keyword>
<keyword id="KW-1015">Disulfide bond</keyword>
<keyword id="KW-0297">G-protein coupled receptor</keyword>
<keyword id="KW-0325">Glycoprotein</keyword>
<keyword id="KW-0472">Membrane</keyword>
<keyword id="KW-0597">Phosphoprotein</keyword>
<keyword id="KW-0600">Photoreceptor protein</keyword>
<keyword id="KW-0675">Receptor</keyword>
<keyword id="KW-1185">Reference proteome</keyword>
<keyword id="KW-0681">Retinal protein</keyword>
<keyword id="KW-0716">Sensory transduction</keyword>
<keyword id="KW-0807">Transducer</keyword>
<keyword id="KW-0812">Transmembrane</keyword>
<keyword id="KW-1133">Transmembrane helix</keyword>
<keyword id="KW-0844">Vision</keyword>
<protein>
    <recommendedName>
        <fullName>Red-sensitive opsin</fullName>
    </recommendedName>
    <alternativeName>
        <fullName>Iodopsin</fullName>
    </alternativeName>
    <alternativeName>
        <fullName>Red cone photoreceptor pigment</fullName>
    </alternativeName>
</protein>
<comment type="function">
    <text>Visual pigments are the light-absorbing molecules that mediate vision. They consist of an apoprotein, opsin, covalently linked to cis-retinal.</text>
</comment>
<comment type="biophysicochemical properties">
    <absorption>
        <max>571 nm</max>
    </absorption>
</comment>
<comment type="subcellular location">
    <subcellularLocation>
        <location>Membrane</location>
        <topology>Multi-pass membrane protein</topology>
    </subcellularLocation>
</comment>
<comment type="tissue specificity">
    <text>The color pigments are found in the cone photoreceptor cells.</text>
</comment>
<comment type="PTM">
    <text evidence="3">Phosphorylated on some or all of the serine and threonine residues present in the C-terminal region.</text>
</comment>
<comment type="similarity">
    <text evidence="2">Belongs to the G-protein coupled receptor 1 family. Opsin subfamily.</text>
</comment>
<sequence length="362" mass="40326">MAAWEAAFAARRRHEEEDTTRDSVFTYTNSNNTRGPFEGPNYHIAPRWVYNLTSVWMIFVVAASVFTNGLVLVATWKFKKLRHPLNWILVNLAVADLGETVIASTISVINQISGYFILGHPMCVVEGYTVSACGITALWSLAIISWERWFVVCKPFGNIKFDGKLAVAGILFSWLWSCAWTAPPIFGWSRYWPHGLKTSCGPDVFSGSSDPGVQSYMVVLMVTCCFFPLAIIILCYLQVWLAIRAVAAQQKESESTQKAEKEVSRMVVVMIVAYCFCWGPYTFFACFAAANPGYAFHPLAAALPAYFAKSATIYNPIIYVFMNRQFRNCILQLFGKKVDDGSEVSTSRTEVSSVSNSSVSPA</sequence>
<feature type="chain" id="PRO_0000197797" description="Red-sensitive opsin">
    <location>
        <begin position="1"/>
        <end position="362"/>
    </location>
</feature>
<feature type="topological domain" description="Extracellular">
    <location>
        <begin position="1"/>
        <end position="49"/>
    </location>
</feature>
<feature type="transmembrane region" description="Helical; Name=1" evidence="1">
    <location>
        <begin position="50"/>
        <end position="74"/>
    </location>
</feature>
<feature type="topological domain" description="Cytoplasmic">
    <location>
        <begin position="75"/>
        <end position="86"/>
    </location>
</feature>
<feature type="transmembrane region" description="Helical; Name=2" evidence="1">
    <location>
        <begin position="87"/>
        <end position="112"/>
    </location>
</feature>
<feature type="topological domain" description="Extracellular">
    <location>
        <begin position="113"/>
        <end position="126"/>
    </location>
</feature>
<feature type="transmembrane region" description="Helical; Name=3" evidence="1">
    <location>
        <begin position="127"/>
        <end position="146"/>
    </location>
</feature>
<feature type="topological domain" description="Cytoplasmic">
    <location>
        <begin position="147"/>
        <end position="165"/>
    </location>
</feature>
<feature type="transmembrane region" description="Helical; Name=4" evidence="1">
    <location>
        <begin position="166"/>
        <end position="189"/>
    </location>
</feature>
<feature type="topological domain" description="Extracellular">
    <location>
        <begin position="190"/>
        <end position="215"/>
    </location>
</feature>
<feature type="transmembrane region" description="Helical; Name=5" evidence="1">
    <location>
        <begin position="216"/>
        <end position="243"/>
    </location>
</feature>
<feature type="topological domain" description="Cytoplasmic">
    <location>
        <begin position="244"/>
        <end position="265"/>
    </location>
</feature>
<feature type="transmembrane region" description="Helical; Name=6" evidence="1">
    <location>
        <begin position="266"/>
        <end position="289"/>
    </location>
</feature>
<feature type="topological domain" description="Extracellular">
    <location>
        <begin position="290"/>
        <end position="297"/>
    </location>
</feature>
<feature type="transmembrane region" description="Helical; Name=7" evidence="1">
    <location>
        <begin position="298"/>
        <end position="322"/>
    </location>
</feature>
<feature type="topological domain" description="Cytoplasmic">
    <location>
        <begin position="323"/>
        <end position="362"/>
    </location>
</feature>
<feature type="modified residue" description="N6-(retinylidene)lysine">
    <location>
        <position position="309"/>
    </location>
</feature>
<feature type="glycosylation site" description="N-linked (GlcNAc...) asparagine" evidence="1">
    <location>
        <position position="31"/>
    </location>
</feature>
<feature type="disulfide bond" evidence="2">
    <location>
        <begin position="123"/>
        <end position="200"/>
    </location>
</feature>
<feature type="sequence conflict" description="In Ref. 2; CAA40727." evidence="4" ref="2">
    <original>V</original>
    <variation>L</variation>
    <location>
        <position position="55"/>
    </location>
</feature>
<feature type="sequence conflict" description="In Ref. 2; CAA40727." evidence="4" ref="2">
    <original>W</original>
    <variation>S</variation>
    <location>
        <position position="240"/>
    </location>
</feature>
<name>OPSR_CHICK</name>
<dbReference type="EMBL" id="M62903">
    <property type="protein sequence ID" value="AAA49137.1"/>
    <property type="molecule type" value="mRNA"/>
</dbReference>
<dbReference type="EMBL" id="X57490">
    <property type="protein sequence ID" value="CAA40727.1"/>
    <property type="molecule type" value="mRNA"/>
</dbReference>
<dbReference type="PIR" id="A37783">
    <property type="entry name" value="A37783"/>
</dbReference>
<dbReference type="RefSeq" id="NP_990771.1">
    <property type="nucleotide sequence ID" value="NM_205440.1"/>
</dbReference>
<dbReference type="SMR" id="P22329"/>
<dbReference type="FunCoup" id="P22329">
    <property type="interactions" value="121"/>
</dbReference>
<dbReference type="STRING" id="9031.ENSGALP00000073974"/>
<dbReference type="GlyGen" id="P22329">
    <property type="glycosylation" value="1 site"/>
</dbReference>
<dbReference type="GeneID" id="396421"/>
<dbReference type="KEGG" id="gga:396421"/>
<dbReference type="CTD" id="5956"/>
<dbReference type="VEuPathDB" id="HostDB:geneid_396421"/>
<dbReference type="InParanoid" id="P22329"/>
<dbReference type="OrthoDB" id="8545112at2759"/>
<dbReference type="PhylomeDB" id="P22329"/>
<dbReference type="PRO" id="PR:P22329"/>
<dbReference type="Proteomes" id="UP000000539">
    <property type="component" value="Unassembled WGS sequence"/>
</dbReference>
<dbReference type="GO" id="GO:0044297">
    <property type="term" value="C:cell body"/>
    <property type="evidence" value="ECO:0000314"/>
    <property type="project" value="AgBase"/>
</dbReference>
<dbReference type="GO" id="GO:0060342">
    <property type="term" value="C:photoreceptor inner segment membrane"/>
    <property type="evidence" value="ECO:0000314"/>
    <property type="project" value="AgBase"/>
</dbReference>
<dbReference type="GO" id="GO:0001750">
    <property type="term" value="C:photoreceptor outer segment"/>
    <property type="evidence" value="ECO:0000314"/>
    <property type="project" value="AgBase"/>
</dbReference>
<dbReference type="GO" id="GO:0005886">
    <property type="term" value="C:plasma membrane"/>
    <property type="evidence" value="ECO:0000318"/>
    <property type="project" value="GO_Central"/>
</dbReference>
<dbReference type="GO" id="GO:0031982">
    <property type="term" value="C:vesicle"/>
    <property type="evidence" value="ECO:0000314"/>
    <property type="project" value="AgBase"/>
</dbReference>
<dbReference type="GO" id="GO:0031404">
    <property type="term" value="F:chloride ion binding"/>
    <property type="evidence" value="ECO:0000314"/>
    <property type="project" value="AgBase"/>
</dbReference>
<dbReference type="GO" id="GO:0008020">
    <property type="term" value="F:G protein-coupled photoreceptor activity"/>
    <property type="evidence" value="ECO:0000318"/>
    <property type="project" value="GO_Central"/>
</dbReference>
<dbReference type="GO" id="GO:0042803">
    <property type="term" value="F:protein homodimerization activity"/>
    <property type="evidence" value="ECO:0000314"/>
    <property type="project" value="AgBase"/>
</dbReference>
<dbReference type="GO" id="GO:0016039">
    <property type="term" value="P:absorption of UV light"/>
    <property type="evidence" value="ECO:0000314"/>
    <property type="project" value="AgBase"/>
</dbReference>
<dbReference type="GO" id="GO:0016038">
    <property type="term" value="P:absorption of visible light"/>
    <property type="evidence" value="ECO:0000314"/>
    <property type="project" value="AgBase"/>
</dbReference>
<dbReference type="GO" id="GO:0071482">
    <property type="term" value="P:cellular response to light stimulus"/>
    <property type="evidence" value="ECO:0000318"/>
    <property type="project" value="GO_Central"/>
</dbReference>
<dbReference type="GO" id="GO:0007186">
    <property type="term" value="P:G protein-coupled receptor signaling pathway"/>
    <property type="evidence" value="ECO:0000318"/>
    <property type="project" value="GO_Central"/>
</dbReference>
<dbReference type="GO" id="GO:0016037">
    <property type="term" value="P:light absorption"/>
    <property type="evidence" value="ECO:0000314"/>
    <property type="project" value="AgBase"/>
</dbReference>
<dbReference type="GO" id="GO:0007602">
    <property type="term" value="P:phototransduction"/>
    <property type="evidence" value="ECO:0000318"/>
    <property type="project" value="GO_Central"/>
</dbReference>
<dbReference type="GO" id="GO:0070207">
    <property type="term" value="P:protein homotrimerization"/>
    <property type="evidence" value="ECO:0000314"/>
    <property type="project" value="AgBase"/>
</dbReference>
<dbReference type="GO" id="GO:0007601">
    <property type="term" value="P:visual perception"/>
    <property type="evidence" value="ECO:0007669"/>
    <property type="project" value="UniProtKB-KW"/>
</dbReference>
<dbReference type="CDD" id="cd15081">
    <property type="entry name" value="7tmA_LWS_opsin"/>
    <property type="match status" value="1"/>
</dbReference>
<dbReference type="FunFam" id="1.20.1070.10:FF:000090">
    <property type="entry name" value="Long-wave-sensitive opsin 1"/>
    <property type="match status" value="1"/>
</dbReference>
<dbReference type="Gene3D" id="1.20.1070.10">
    <property type="entry name" value="Rhodopsin 7-helix transmembrane proteins"/>
    <property type="match status" value="1"/>
</dbReference>
<dbReference type="InterPro" id="IPR050125">
    <property type="entry name" value="GPCR_opsins"/>
</dbReference>
<dbReference type="InterPro" id="IPR000276">
    <property type="entry name" value="GPCR_Rhodpsn"/>
</dbReference>
<dbReference type="InterPro" id="IPR017452">
    <property type="entry name" value="GPCR_Rhodpsn_7TM"/>
</dbReference>
<dbReference type="InterPro" id="IPR001760">
    <property type="entry name" value="Opsin"/>
</dbReference>
<dbReference type="InterPro" id="IPR000378">
    <property type="entry name" value="Opsin_red/grn"/>
</dbReference>
<dbReference type="InterPro" id="IPR027430">
    <property type="entry name" value="Retinal_BS"/>
</dbReference>
<dbReference type="PANTHER" id="PTHR24240">
    <property type="entry name" value="OPSIN"/>
    <property type="match status" value="1"/>
</dbReference>
<dbReference type="Pfam" id="PF00001">
    <property type="entry name" value="7tm_1"/>
    <property type="match status" value="1"/>
</dbReference>
<dbReference type="PRINTS" id="PR00237">
    <property type="entry name" value="GPCRRHODOPSN"/>
</dbReference>
<dbReference type="PRINTS" id="PR00238">
    <property type="entry name" value="OPSIN"/>
</dbReference>
<dbReference type="PRINTS" id="PR00575">
    <property type="entry name" value="OPSINREDGRN"/>
</dbReference>
<dbReference type="SMART" id="SM01381">
    <property type="entry name" value="7TM_GPCR_Srsx"/>
    <property type="match status" value="1"/>
</dbReference>
<dbReference type="SUPFAM" id="SSF81321">
    <property type="entry name" value="Family A G protein-coupled receptor-like"/>
    <property type="match status" value="1"/>
</dbReference>
<dbReference type="PROSITE" id="PS00237">
    <property type="entry name" value="G_PROTEIN_RECEP_F1_1"/>
    <property type="match status" value="1"/>
</dbReference>
<dbReference type="PROSITE" id="PS50262">
    <property type="entry name" value="G_PROTEIN_RECEP_F1_2"/>
    <property type="match status" value="1"/>
</dbReference>
<dbReference type="PROSITE" id="PS00238">
    <property type="entry name" value="OPSIN"/>
    <property type="match status" value="1"/>
</dbReference>
<reference key="1">
    <citation type="journal article" date="1990" name="Biochem. Biophys. Res. Commun.">
        <title>Cloning of cDNA and amino acid sequence of one of chicken cone visual pigments.</title>
        <authorList>
            <person name="Tokunaga F."/>
            <person name="Iwasa T."/>
            <person name="Miyagishi M."/>
            <person name="Kayada S."/>
        </authorList>
    </citation>
    <scope>NUCLEOTIDE SEQUENCE [MRNA]</scope>
    <source>
        <tissue>Retina</tissue>
    </source>
</reference>
<reference key="2">
    <citation type="journal article" date="1990" name="FEBS Lett.">
        <title>The primary structure of iodopsin, a chicken red-sensitive cone pigment.</title>
        <authorList>
            <person name="Kuwata O."/>
            <person name="Imamoto Y."/>
            <person name="Okano T."/>
            <person name="Kokame K."/>
            <person name="Kojima D."/>
            <person name="Matsumoto H."/>
            <person name="Morodome A."/>
            <person name="Fukada Y."/>
            <person name="Shichida Y."/>
            <person name="Yasuda K."/>
            <person name="Shimura Y."/>
            <person name="Yoshizawa T."/>
        </authorList>
    </citation>
    <scope>NUCLEOTIDE SEQUENCE [MRNA]</scope>
</reference>
<reference key="3">
    <citation type="journal article" date="1990" name="Biochemistry">
        <title>Phosphorylation of iodopsin, chicken red-sensitive cone visual pigment.</title>
        <authorList>
            <person name="Fukada Y."/>
            <person name="Kokame K."/>
            <person name="Okano T."/>
            <person name="Shichida Y."/>
            <person name="Yoshizawa T."/>
            <person name="McDowell J.H."/>
            <person name="Hargrave P.A."/>
            <person name="Palczewski K."/>
        </authorList>
    </citation>
    <scope>PROTEIN SEQUENCE OF 322-362</scope>
    <scope>PHOSPHORYLATION</scope>
</reference>
<reference key="4">
    <citation type="journal article" date="1995" name="J. Biochem.">
        <title>Structure and regulation of the chicken GATA-3 gene.</title>
        <authorList>
            <person name="Ishihara H."/>
            <person name="Engel J.D."/>
            <person name="Yamamoto M."/>
        </authorList>
    </citation>
    <scope>NUCLEOTIDE SEQUENCE [MRNA] OF 1-18</scope>
</reference>